<feature type="chain" id="PRO_0000392224" description="HTH-type transcriptional regulator AlkS">
    <location>
        <begin position="1"/>
        <end position="883"/>
    </location>
</feature>
<feature type="domain" description="HTH luxR-type" evidence="2">
    <location>
        <begin position="816"/>
        <end position="881"/>
    </location>
</feature>
<feature type="DNA-binding region" description="H-T-H motif" evidence="2">
    <location>
        <begin position="840"/>
        <end position="859"/>
    </location>
</feature>
<organism>
    <name type="scientific">Pseudomonas putida</name>
    <name type="common">Arthrobacter siderocapsulatus</name>
    <dbReference type="NCBI Taxonomy" id="303"/>
    <lineage>
        <taxon>Bacteria</taxon>
        <taxon>Pseudomonadati</taxon>
        <taxon>Pseudomonadota</taxon>
        <taxon>Gammaproteobacteria</taxon>
        <taxon>Pseudomonadales</taxon>
        <taxon>Pseudomonadaceae</taxon>
        <taxon>Pseudomonas</taxon>
    </lineage>
</organism>
<name>ALKS_PSEPU</name>
<accession>Q9L4M7</accession>
<gene>
    <name type="primary">alkS</name>
</gene>
<comment type="function">
    <text evidence="1">May act as a transcriptional regulator of AlkB.</text>
</comment>
<comment type="pathway">
    <text>Hydrocarbon metabolism; alkane degradation.</text>
</comment>
<dbReference type="EMBL" id="AJ233397">
    <property type="protein sequence ID" value="CAB69079.1"/>
    <property type="molecule type" value="Genomic_DNA"/>
</dbReference>
<dbReference type="SMR" id="Q9L4M7"/>
<dbReference type="UniPathway" id="UPA00191"/>
<dbReference type="GO" id="GO:0003677">
    <property type="term" value="F:DNA binding"/>
    <property type="evidence" value="ECO:0007669"/>
    <property type="project" value="UniProtKB-KW"/>
</dbReference>
<dbReference type="GO" id="GO:0043448">
    <property type="term" value="P:alkane catabolic process"/>
    <property type="evidence" value="ECO:0007669"/>
    <property type="project" value="UniProtKB-UniPathway"/>
</dbReference>
<dbReference type="GO" id="GO:0006355">
    <property type="term" value="P:regulation of DNA-templated transcription"/>
    <property type="evidence" value="ECO:0007669"/>
    <property type="project" value="InterPro"/>
</dbReference>
<dbReference type="CDD" id="cd06170">
    <property type="entry name" value="LuxR_C_like"/>
    <property type="match status" value="1"/>
</dbReference>
<dbReference type="Gene3D" id="1.10.10.10">
    <property type="entry name" value="Winged helix-like DNA-binding domain superfamily/Winged helix DNA-binding domain"/>
    <property type="match status" value="1"/>
</dbReference>
<dbReference type="InterPro" id="IPR016032">
    <property type="entry name" value="Sig_transdc_resp-reg_C-effctor"/>
</dbReference>
<dbReference type="InterPro" id="IPR000792">
    <property type="entry name" value="Tscrpt_reg_LuxR_C"/>
</dbReference>
<dbReference type="InterPro" id="IPR036388">
    <property type="entry name" value="WH-like_DNA-bd_sf"/>
</dbReference>
<dbReference type="PANTHER" id="PTHR44688">
    <property type="entry name" value="DNA-BINDING TRANSCRIPTIONAL ACTIVATOR DEVR_DOSR"/>
    <property type="match status" value="1"/>
</dbReference>
<dbReference type="PANTHER" id="PTHR44688:SF16">
    <property type="entry name" value="DNA-BINDING TRANSCRIPTIONAL ACTIVATOR DEVR_DOSR"/>
    <property type="match status" value="1"/>
</dbReference>
<dbReference type="Pfam" id="PF00196">
    <property type="entry name" value="GerE"/>
    <property type="match status" value="1"/>
</dbReference>
<dbReference type="SMART" id="SM00421">
    <property type="entry name" value="HTH_LUXR"/>
    <property type="match status" value="1"/>
</dbReference>
<dbReference type="SUPFAM" id="SSF46894">
    <property type="entry name" value="C-terminal effector domain of the bipartite response regulators"/>
    <property type="match status" value="1"/>
</dbReference>
<dbReference type="PROSITE" id="PS50043">
    <property type="entry name" value="HTH_LUXR_2"/>
    <property type="match status" value="1"/>
</dbReference>
<proteinExistence type="inferred from homology"/>
<protein>
    <recommendedName>
        <fullName>HTH-type transcriptional regulator AlkS</fullName>
    </recommendedName>
</protein>
<evidence type="ECO:0000250" key="1"/>
<evidence type="ECO:0000255" key="2">
    <source>
        <dbReference type="PROSITE-ProRule" id="PRU00411"/>
    </source>
</evidence>
<keyword id="KW-0238">DNA-binding</keyword>
<keyword id="KW-0804">Transcription</keyword>
<keyword id="KW-0805">Transcription regulation</keyword>
<sequence>MKIKIINNDFPVAKIGLDRITTLVSAKVHNCIYRPRLSIADGTAPRVCLYRAPPGYGKTVALAFEWLRHRTTGRPAVWISLRASSYSEFDICAEIIEQLEAFELVTFSHVREGVSKPTLLRDLASSLWQSTSSNEIETLICLDNINQGLGLPLLHALMEFMLETPKSIRFAVAGNTIKGFSRLKLAGAMQEHTEKDLAFSADEAVALVEAEAVLGVSEVQIEALVQEMEGWPVLIGFLLKCELPAKSISTVVEIDNYFNDEIFEALPERYRVFLVNSSLLDVVTPDGYNYVFKCVNAASCIKYLSTNYMLLRHVEGEPAQFTLHPVLRDFLQGIAWAENPAKRSYLLKRAAFWHWRRGEYQYAIRIALRANDCRWAVGMSEGIILDLSFRQGEIDTLRHWLSELPVKDLHKNPIVLICFAWVLYFSQQSARAEKLLKDLITPPDKKNKWQEKGWPQLVFAIGKATNDEMLLSEELCNKWISLFGDSNAVGKGAALTCLAFIFASEYRFAELEKVLAQAQAVNKFAKQDFAFGWLYVAKLQQALASGKMSWARQLITQARTDSGAQIMETAFTSKMLDALELESNYELCRLDTSEEKFSEILEFIANHGVTDVFFSVCRVVSAWRLGRNDLNGSIEILEWAKAYAAEKNLPRLEVMSQIEIYQRLLFQGVTYINTLQAFEDRKIFSGPHSAPLKARLLLVQSLALSRDQNFHLAAHRALLAIQQARKISAGQLEVRGLLYLAGAQAGGGTLKKAQHNIAYALEMAKQLQCFQTVLDEIRLIKRLIPTSCEVFAAVNLDQAIGAFSLPQMVEIRKSAENKAGDFLTLKQVSVLKLVKEGCSNKQIATKMYVTEDAIKWHMRKIFTILNVKSRTQAIIEAERQGVI</sequence>
<reference key="1">
    <citation type="journal article" date="1999" name="Environ. Microbiol.">
        <title>Molecular screening for alkane hydroxylase genes in Gram-negative and Gram-positive strains.</title>
        <authorList>
            <person name="Smits T.H.M."/>
            <person name="Roethlisberger M."/>
            <person name="Witholt B."/>
            <person name="Van Beilen J.B."/>
        </authorList>
    </citation>
    <scope>NUCLEOTIDE SEQUENCE [GENOMIC DNA]</scope>
    <source>
        <strain>P1</strain>
    </source>
</reference>
<reference key="2">
    <citation type="journal article" date="2001" name="Microbiology">
        <title>Analysis of Pseudomonas putida alkane degradation gene clusters and flanking insertion sequences: evolution and regulation of the alk-genes.</title>
        <authorList>
            <person name="Van Beilen J.B."/>
            <person name="Panke S."/>
            <person name="Lucchini S."/>
            <person name="Franchini A.G."/>
            <person name="Roethlisberger M."/>
            <person name="Witholt B."/>
        </authorList>
    </citation>
    <scope>NUCLEOTIDE SEQUENCE [GENOMIC DNA]</scope>
    <source>
        <strain>P1</strain>
    </source>
</reference>